<gene>
    <name evidence="1" type="primary">secA</name>
    <name type="ordered locus">CLK_3351</name>
</gene>
<protein>
    <recommendedName>
        <fullName evidence="1">Protein translocase subunit SecA</fullName>
        <ecNumber evidence="1">7.4.2.8</ecNumber>
    </recommendedName>
</protein>
<name>SECA_CLOBM</name>
<keyword id="KW-0067">ATP-binding</keyword>
<keyword id="KW-1003">Cell membrane</keyword>
<keyword id="KW-0963">Cytoplasm</keyword>
<keyword id="KW-0472">Membrane</keyword>
<keyword id="KW-0479">Metal-binding</keyword>
<keyword id="KW-0547">Nucleotide-binding</keyword>
<keyword id="KW-0653">Protein transport</keyword>
<keyword id="KW-1278">Translocase</keyword>
<keyword id="KW-0811">Translocation</keyword>
<keyword id="KW-0813">Transport</keyword>
<keyword id="KW-0862">Zinc</keyword>
<sequence length="835" mass="95514">MGILNKIFGTYSERELRRVNPIVNKIEALDEKMQSLKDEDFKLKTEEFKSRLEKGEKLDDILPEAFALVREASHRTIGLKHYREQLIGGVVLHQGRIGEMKTGEGKTLVATLPAYVNALTGKGVHIVTVNDYLAKRDRDLMAPVYEFLGLKVGVILHNLNNEERQEAYGSDITYGTNSEFGFDYLRDNMVVYKEERVQRKLNFSIVDEVDSILIDEARTPLIISGQGEKSTEFYKVADYFTKSLIAEKDFTIDEKANSAMLTDEGVNKAENFFKVDNYADAENMEIQHHVVQALKANYVMKKDKDYMIKDGEILIVDEFTGRAMEGRRYSDGLHQAIEAKEGVRVERESKTLATITYQNYFRMYNKLSGMTGTAQTEENEFREIYGLDVIVIPTHEPIARIDNADVVYKSEKGKFKAIVDEIVERYKKGQPMLVGTVSIEKSEMLSSMLKKKGVPHQVLNAKYHEKEAEIISHAGEYGMVTIATNMAGRGTDIKLTKEAEEAGGLMIIGTERHESRRIDNQLRGRSGRQGDPGESRFFVSLEDDLMRIFGSERIQGIVDKLGLAEDEAIESKMVSSAIESAQKKVEGNNFDIRKTLLQYDDVINKQREIIYKQRSEVLEGEDLKDQIRDMIRDVAYTAVNSHVSGVEEEFETELQNLVNYLEDICLPKALVKVKDISNLSDEEIKEKLLEAVENIYSNKEKEIGEEQIREIERVILLRVVDTKWMDHIDDMDHLKQGIGLRAYRQQDPVQAYQFEGSEMFEEMIYNIKVDTVRYLFHVEVEKAPEREKVAKETSTNYDEDSVKKQPIKKENRIGRNDMCPCGSGKKYKNCCGRMA</sequence>
<accession>B1KSU4</accession>
<comment type="function">
    <text evidence="1">Part of the Sec protein translocase complex. Interacts with the SecYEG preprotein conducting channel. Has a central role in coupling the hydrolysis of ATP to the transfer of proteins into and across the cell membrane, serving as an ATP-driven molecular motor driving the stepwise translocation of polypeptide chains across the membrane.</text>
</comment>
<comment type="catalytic activity">
    <reaction evidence="1">
        <text>ATP + H2O + cellular proteinSide 1 = ADP + phosphate + cellular proteinSide 2.</text>
        <dbReference type="EC" id="7.4.2.8"/>
    </reaction>
</comment>
<comment type="cofactor">
    <cofactor evidence="1">
        <name>Zn(2+)</name>
        <dbReference type="ChEBI" id="CHEBI:29105"/>
    </cofactor>
    <text evidence="1">May bind 1 zinc ion per subunit.</text>
</comment>
<comment type="subunit">
    <text evidence="1">Monomer and homodimer. Part of the essential Sec protein translocation apparatus which comprises SecA, SecYEG and auxiliary proteins SecDF. Other proteins may also be involved.</text>
</comment>
<comment type="subcellular location">
    <subcellularLocation>
        <location evidence="1">Cell membrane</location>
        <topology evidence="1">Peripheral membrane protein</topology>
        <orientation evidence="1">Cytoplasmic side</orientation>
    </subcellularLocation>
    <subcellularLocation>
        <location evidence="1">Cytoplasm</location>
    </subcellularLocation>
    <text evidence="1">Distribution is 50-50.</text>
</comment>
<comment type="similarity">
    <text evidence="1">Belongs to the SecA family.</text>
</comment>
<feature type="chain" id="PRO_1000144997" description="Protein translocase subunit SecA">
    <location>
        <begin position="1"/>
        <end position="835"/>
    </location>
</feature>
<feature type="binding site" evidence="1">
    <location>
        <position position="85"/>
    </location>
    <ligand>
        <name>ATP</name>
        <dbReference type="ChEBI" id="CHEBI:30616"/>
    </ligand>
</feature>
<feature type="binding site" evidence="1">
    <location>
        <begin position="103"/>
        <end position="107"/>
    </location>
    <ligand>
        <name>ATP</name>
        <dbReference type="ChEBI" id="CHEBI:30616"/>
    </ligand>
</feature>
<feature type="binding site" evidence="1">
    <location>
        <position position="492"/>
    </location>
    <ligand>
        <name>ATP</name>
        <dbReference type="ChEBI" id="CHEBI:30616"/>
    </ligand>
</feature>
<feature type="binding site" evidence="1">
    <location>
        <position position="819"/>
    </location>
    <ligand>
        <name>Zn(2+)</name>
        <dbReference type="ChEBI" id="CHEBI:29105"/>
    </ligand>
</feature>
<feature type="binding site" evidence="1">
    <location>
        <position position="821"/>
    </location>
    <ligand>
        <name>Zn(2+)</name>
        <dbReference type="ChEBI" id="CHEBI:29105"/>
    </ligand>
</feature>
<feature type="binding site" evidence="1">
    <location>
        <position position="830"/>
    </location>
    <ligand>
        <name>Zn(2+)</name>
        <dbReference type="ChEBI" id="CHEBI:29105"/>
    </ligand>
</feature>
<feature type="binding site" evidence="1">
    <location>
        <position position="831"/>
    </location>
    <ligand>
        <name>Zn(2+)</name>
        <dbReference type="ChEBI" id="CHEBI:29105"/>
    </ligand>
</feature>
<evidence type="ECO:0000255" key="1">
    <source>
        <dbReference type="HAMAP-Rule" id="MF_01382"/>
    </source>
</evidence>
<proteinExistence type="inferred from homology"/>
<organism>
    <name type="scientific">Clostridium botulinum (strain Loch Maree / Type A3)</name>
    <dbReference type="NCBI Taxonomy" id="498214"/>
    <lineage>
        <taxon>Bacteria</taxon>
        <taxon>Bacillati</taxon>
        <taxon>Bacillota</taxon>
        <taxon>Clostridia</taxon>
        <taxon>Eubacteriales</taxon>
        <taxon>Clostridiaceae</taxon>
        <taxon>Clostridium</taxon>
    </lineage>
</organism>
<reference key="1">
    <citation type="journal article" date="2007" name="PLoS ONE">
        <title>Analysis of the neurotoxin complex genes in Clostridium botulinum A1-A4 and B1 strains: BoNT/A3, /Ba4 and /B1 clusters are located within plasmids.</title>
        <authorList>
            <person name="Smith T.J."/>
            <person name="Hill K.K."/>
            <person name="Foley B.T."/>
            <person name="Detter J.C."/>
            <person name="Munk A.C."/>
            <person name="Bruce D.C."/>
            <person name="Doggett N.A."/>
            <person name="Smith L.A."/>
            <person name="Marks J.D."/>
            <person name="Xie G."/>
            <person name="Brettin T.S."/>
        </authorList>
    </citation>
    <scope>NUCLEOTIDE SEQUENCE [LARGE SCALE GENOMIC DNA]</scope>
    <source>
        <strain>Loch Maree / Type A3</strain>
    </source>
</reference>
<dbReference type="EC" id="7.4.2.8" evidence="1"/>
<dbReference type="EMBL" id="CP000962">
    <property type="protein sequence ID" value="ACA54363.1"/>
    <property type="molecule type" value="Genomic_DNA"/>
</dbReference>
<dbReference type="RefSeq" id="WP_012342480.1">
    <property type="nucleotide sequence ID" value="NC_010520.1"/>
</dbReference>
<dbReference type="SMR" id="B1KSU4"/>
<dbReference type="KEGG" id="cbl:CLK_3351"/>
<dbReference type="HOGENOM" id="CLU_005314_3_0_9"/>
<dbReference type="GO" id="GO:0031522">
    <property type="term" value="C:cell envelope Sec protein transport complex"/>
    <property type="evidence" value="ECO:0007669"/>
    <property type="project" value="TreeGrafter"/>
</dbReference>
<dbReference type="GO" id="GO:0005829">
    <property type="term" value="C:cytosol"/>
    <property type="evidence" value="ECO:0007669"/>
    <property type="project" value="TreeGrafter"/>
</dbReference>
<dbReference type="GO" id="GO:0005886">
    <property type="term" value="C:plasma membrane"/>
    <property type="evidence" value="ECO:0007669"/>
    <property type="project" value="UniProtKB-SubCell"/>
</dbReference>
<dbReference type="GO" id="GO:0005524">
    <property type="term" value="F:ATP binding"/>
    <property type="evidence" value="ECO:0007669"/>
    <property type="project" value="UniProtKB-UniRule"/>
</dbReference>
<dbReference type="GO" id="GO:0046872">
    <property type="term" value="F:metal ion binding"/>
    <property type="evidence" value="ECO:0007669"/>
    <property type="project" value="UniProtKB-KW"/>
</dbReference>
<dbReference type="GO" id="GO:0008564">
    <property type="term" value="F:protein-exporting ATPase activity"/>
    <property type="evidence" value="ECO:0007669"/>
    <property type="project" value="UniProtKB-EC"/>
</dbReference>
<dbReference type="GO" id="GO:0065002">
    <property type="term" value="P:intracellular protein transmembrane transport"/>
    <property type="evidence" value="ECO:0007669"/>
    <property type="project" value="UniProtKB-UniRule"/>
</dbReference>
<dbReference type="GO" id="GO:0017038">
    <property type="term" value="P:protein import"/>
    <property type="evidence" value="ECO:0007669"/>
    <property type="project" value="InterPro"/>
</dbReference>
<dbReference type="GO" id="GO:0006605">
    <property type="term" value="P:protein targeting"/>
    <property type="evidence" value="ECO:0007669"/>
    <property type="project" value="UniProtKB-UniRule"/>
</dbReference>
<dbReference type="GO" id="GO:0043952">
    <property type="term" value="P:protein transport by the Sec complex"/>
    <property type="evidence" value="ECO:0007669"/>
    <property type="project" value="TreeGrafter"/>
</dbReference>
<dbReference type="CDD" id="cd17928">
    <property type="entry name" value="DEXDc_SecA"/>
    <property type="match status" value="1"/>
</dbReference>
<dbReference type="CDD" id="cd18803">
    <property type="entry name" value="SF2_C_secA"/>
    <property type="match status" value="1"/>
</dbReference>
<dbReference type="FunFam" id="1.10.3060.10:FF:000002">
    <property type="entry name" value="Preprotein translocase subunit SecA"/>
    <property type="match status" value="1"/>
</dbReference>
<dbReference type="FunFam" id="3.40.50.300:FF:000694">
    <property type="entry name" value="Preprotein translocase subunit SecA"/>
    <property type="match status" value="1"/>
</dbReference>
<dbReference type="FunFam" id="3.90.1440.10:FF:000001">
    <property type="entry name" value="Preprotein translocase subunit SecA"/>
    <property type="match status" value="1"/>
</dbReference>
<dbReference type="Gene3D" id="1.10.3060.10">
    <property type="entry name" value="Helical scaffold and wing domains of SecA"/>
    <property type="match status" value="1"/>
</dbReference>
<dbReference type="Gene3D" id="3.40.50.300">
    <property type="entry name" value="P-loop containing nucleotide triphosphate hydrolases"/>
    <property type="match status" value="3"/>
</dbReference>
<dbReference type="Gene3D" id="3.90.1440.10">
    <property type="entry name" value="SecA, preprotein cross-linking domain"/>
    <property type="match status" value="1"/>
</dbReference>
<dbReference type="HAMAP" id="MF_01382">
    <property type="entry name" value="SecA"/>
    <property type="match status" value="1"/>
</dbReference>
<dbReference type="InterPro" id="IPR014001">
    <property type="entry name" value="Helicase_ATP-bd"/>
</dbReference>
<dbReference type="InterPro" id="IPR001650">
    <property type="entry name" value="Helicase_C-like"/>
</dbReference>
<dbReference type="InterPro" id="IPR027417">
    <property type="entry name" value="P-loop_NTPase"/>
</dbReference>
<dbReference type="InterPro" id="IPR004027">
    <property type="entry name" value="SEC_C_motif"/>
</dbReference>
<dbReference type="InterPro" id="IPR000185">
    <property type="entry name" value="SecA"/>
</dbReference>
<dbReference type="InterPro" id="IPR020937">
    <property type="entry name" value="SecA_CS"/>
</dbReference>
<dbReference type="InterPro" id="IPR011115">
    <property type="entry name" value="SecA_DEAD"/>
</dbReference>
<dbReference type="InterPro" id="IPR014018">
    <property type="entry name" value="SecA_motor_DEAD"/>
</dbReference>
<dbReference type="InterPro" id="IPR011130">
    <property type="entry name" value="SecA_preprotein_X-link_dom"/>
</dbReference>
<dbReference type="InterPro" id="IPR044722">
    <property type="entry name" value="SecA_SF2_C"/>
</dbReference>
<dbReference type="InterPro" id="IPR011116">
    <property type="entry name" value="SecA_Wing/Scaffold"/>
</dbReference>
<dbReference type="InterPro" id="IPR036266">
    <property type="entry name" value="SecA_Wing/Scaffold_sf"/>
</dbReference>
<dbReference type="InterPro" id="IPR036670">
    <property type="entry name" value="SecA_X-link_sf"/>
</dbReference>
<dbReference type="NCBIfam" id="NF006630">
    <property type="entry name" value="PRK09200.1"/>
    <property type="match status" value="1"/>
</dbReference>
<dbReference type="NCBIfam" id="NF009538">
    <property type="entry name" value="PRK12904.1"/>
    <property type="match status" value="1"/>
</dbReference>
<dbReference type="NCBIfam" id="TIGR00963">
    <property type="entry name" value="secA"/>
    <property type="match status" value="1"/>
</dbReference>
<dbReference type="PANTHER" id="PTHR30612:SF0">
    <property type="entry name" value="CHLOROPLAST PROTEIN-TRANSPORTING ATPASE"/>
    <property type="match status" value="1"/>
</dbReference>
<dbReference type="PANTHER" id="PTHR30612">
    <property type="entry name" value="SECA INNER MEMBRANE COMPONENT OF SEC PROTEIN SECRETION SYSTEM"/>
    <property type="match status" value="1"/>
</dbReference>
<dbReference type="Pfam" id="PF21090">
    <property type="entry name" value="P-loop_SecA"/>
    <property type="match status" value="1"/>
</dbReference>
<dbReference type="Pfam" id="PF02810">
    <property type="entry name" value="SEC-C"/>
    <property type="match status" value="1"/>
</dbReference>
<dbReference type="Pfam" id="PF07517">
    <property type="entry name" value="SecA_DEAD"/>
    <property type="match status" value="1"/>
</dbReference>
<dbReference type="Pfam" id="PF01043">
    <property type="entry name" value="SecA_PP_bind"/>
    <property type="match status" value="1"/>
</dbReference>
<dbReference type="Pfam" id="PF07516">
    <property type="entry name" value="SecA_SW"/>
    <property type="match status" value="1"/>
</dbReference>
<dbReference type="PRINTS" id="PR00906">
    <property type="entry name" value="SECA"/>
</dbReference>
<dbReference type="SMART" id="SM00957">
    <property type="entry name" value="SecA_DEAD"/>
    <property type="match status" value="1"/>
</dbReference>
<dbReference type="SMART" id="SM00958">
    <property type="entry name" value="SecA_PP_bind"/>
    <property type="match status" value="1"/>
</dbReference>
<dbReference type="SUPFAM" id="SSF81886">
    <property type="entry name" value="Helical scaffold and wing domains of SecA"/>
    <property type="match status" value="1"/>
</dbReference>
<dbReference type="SUPFAM" id="SSF52540">
    <property type="entry name" value="P-loop containing nucleoside triphosphate hydrolases"/>
    <property type="match status" value="2"/>
</dbReference>
<dbReference type="SUPFAM" id="SSF81767">
    <property type="entry name" value="Pre-protein crosslinking domain of SecA"/>
    <property type="match status" value="1"/>
</dbReference>
<dbReference type="PROSITE" id="PS01312">
    <property type="entry name" value="SECA"/>
    <property type="match status" value="1"/>
</dbReference>
<dbReference type="PROSITE" id="PS51196">
    <property type="entry name" value="SECA_MOTOR_DEAD"/>
    <property type="match status" value="1"/>
</dbReference>